<keyword id="KW-1185">Reference proteome</keyword>
<keyword id="KW-0687">Ribonucleoprotein</keyword>
<keyword id="KW-0689">Ribosomal protein</keyword>
<keyword id="KW-0694">RNA-binding</keyword>
<keyword id="KW-0699">rRNA-binding</keyword>
<reference key="1">
    <citation type="journal article" date="2003" name="Proc. Natl. Acad. Sci. U.S.A.">
        <title>The complete genome sequence of the Arabidopsis and tomato pathogen Pseudomonas syringae pv. tomato DC3000.</title>
        <authorList>
            <person name="Buell C.R."/>
            <person name="Joardar V."/>
            <person name="Lindeberg M."/>
            <person name="Selengut J."/>
            <person name="Paulsen I.T."/>
            <person name="Gwinn M.L."/>
            <person name="Dodson R.J."/>
            <person name="DeBoy R.T."/>
            <person name="Durkin A.S."/>
            <person name="Kolonay J.F."/>
            <person name="Madupu R."/>
            <person name="Daugherty S.C."/>
            <person name="Brinkac L.M."/>
            <person name="Beanan M.J."/>
            <person name="Haft D.H."/>
            <person name="Nelson W.C."/>
            <person name="Davidsen T.M."/>
            <person name="Zafar N."/>
            <person name="Zhou L."/>
            <person name="Liu J."/>
            <person name="Yuan Q."/>
            <person name="Khouri H.M."/>
            <person name="Fedorova N.B."/>
            <person name="Tran B."/>
            <person name="Russell D."/>
            <person name="Berry K.J."/>
            <person name="Utterback T.R."/>
            <person name="Van Aken S.E."/>
            <person name="Feldblyum T.V."/>
            <person name="D'Ascenzo M."/>
            <person name="Deng W.-L."/>
            <person name="Ramos A.R."/>
            <person name="Alfano J.R."/>
            <person name="Cartinhour S."/>
            <person name="Chatterjee A.K."/>
            <person name="Delaney T.P."/>
            <person name="Lazarowitz S.G."/>
            <person name="Martin G.B."/>
            <person name="Schneider D.J."/>
            <person name="Tang X."/>
            <person name="Bender C.L."/>
            <person name="White O."/>
            <person name="Fraser C.M."/>
            <person name="Collmer A."/>
        </authorList>
    </citation>
    <scope>NUCLEOTIDE SEQUENCE [LARGE SCALE GENOMIC DNA]</scope>
    <source>
        <strain>ATCC BAA-871 / DC3000</strain>
    </source>
</reference>
<dbReference type="EMBL" id="AE016853">
    <property type="protein sequence ID" value="AAO55892.1"/>
    <property type="molecule type" value="Genomic_DNA"/>
</dbReference>
<dbReference type="RefSeq" id="NP_792197.1">
    <property type="nucleotide sequence ID" value="NC_004578.1"/>
</dbReference>
<dbReference type="RefSeq" id="WP_002553161.1">
    <property type="nucleotide sequence ID" value="NC_004578.1"/>
</dbReference>
<dbReference type="SMR" id="P0A159"/>
<dbReference type="STRING" id="223283.PSPTO_2381"/>
<dbReference type="GeneID" id="98112258"/>
<dbReference type="KEGG" id="pst:PSPTO_2381"/>
<dbReference type="PATRIC" id="fig|223283.9.peg.2416"/>
<dbReference type="eggNOG" id="COG0292">
    <property type="taxonomic scope" value="Bacteria"/>
</dbReference>
<dbReference type="HOGENOM" id="CLU_123265_0_1_6"/>
<dbReference type="OrthoDB" id="9808966at2"/>
<dbReference type="PhylomeDB" id="P0A159"/>
<dbReference type="PRO" id="PR:P0A159"/>
<dbReference type="Proteomes" id="UP000002515">
    <property type="component" value="Chromosome"/>
</dbReference>
<dbReference type="GO" id="GO:1990904">
    <property type="term" value="C:ribonucleoprotein complex"/>
    <property type="evidence" value="ECO:0007669"/>
    <property type="project" value="UniProtKB-KW"/>
</dbReference>
<dbReference type="GO" id="GO:0005840">
    <property type="term" value="C:ribosome"/>
    <property type="evidence" value="ECO:0007669"/>
    <property type="project" value="UniProtKB-KW"/>
</dbReference>
<dbReference type="GO" id="GO:0019843">
    <property type="term" value="F:rRNA binding"/>
    <property type="evidence" value="ECO:0007669"/>
    <property type="project" value="UniProtKB-UniRule"/>
</dbReference>
<dbReference type="GO" id="GO:0003735">
    <property type="term" value="F:structural constituent of ribosome"/>
    <property type="evidence" value="ECO:0007669"/>
    <property type="project" value="InterPro"/>
</dbReference>
<dbReference type="GO" id="GO:0000027">
    <property type="term" value="P:ribosomal large subunit assembly"/>
    <property type="evidence" value="ECO:0007669"/>
    <property type="project" value="UniProtKB-UniRule"/>
</dbReference>
<dbReference type="GO" id="GO:0006412">
    <property type="term" value="P:translation"/>
    <property type="evidence" value="ECO:0007669"/>
    <property type="project" value="InterPro"/>
</dbReference>
<dbReference type="CDD" id="cd07026">
    <property type="entry name" value="Ribosomal_L20"/>
    <property type="match status" value="1"/>
</dbReference>
<dbReference type="FunFam" id="1.10.1900.20:FF:000001">
    <property type="entry name" value="50S ribosomal protein L20"/>
    <property type="match status" value="1"/>
</dbReference>
<dbReference type="Gene3D" id="6.10.160.10">
    <property type="match status" value="1"/>
</dbReference>
<dbReference type="Gene3D" id="1.10.1900.20">
    <property type="entry name" value="Ribosomal protein L20"/>
    <property type="match status" value="1"/>
</dbReference>
<dbReference type="HAMAP" id="MF_00382">
    <property type="entry name" value="Ribosomal_bL20"/>
    <property type="match status" value="1"/>
</dbReference>
<dbReference type="InterPro" id="IPR005813">
    <property type="entry name" value="Ribosomal_bL20"/>
</dbReference>
<dbReference type="InterPro" id="IPR049946">
    <property type="entry name" value="RIBOSOMAL_L20_CS"/>
</dbReference>
<dbReference type="InterPro" id="IPR035566">
    <property type="entry name" value="Ribosomal_protein_bL20_C"/>
</dbReference>
<dbReference type="NCBIfam" id="TIGR01032">
    <property type="entry name" value="rplT_bact"/>
    <property type="match status" value="1"/>
</dbReference>
<dbReference type="PANTHER" id="PTHR10986">
    <property type="entry name" value="39S RIBOSOMAL PROTEIN L20"/>
    <property type="match status" value="1"/>
</dbReference>
<dbReference type="Pfam" id="PF00453">
    <property type="entry name" value="Ribosomal_L20"/>
    <property type="match status" value="1"/>
</dbReference>
<dbReference type="PRINTS" id="PR00062">
    <property type="entry name" value="RIBOSOMALL20"/>
</dbReference>
<dbReference type="SUPFAM" id="SSF74731">
    <property type="entry name" value="Ribosomal protein L20"/>
    <property type="match status" value="1"/>
</dbReference>
<dbReference type="PROSITE" id="PS00937">
    <property type="entry name" value="RIBOSOMAL_L20"/>
    <property type="match status" value="1"/>
</dbReference>
<proteinExistence type="inferred from homology"/>
<gene>
    <name type="primary">rplT</name>
    <name type="ordered locus">PSPTO_2381</name>
</gene>
<evidence type="ECO:0000250" key="1"/>
<evidence type="ECO:0000305" key="2"/>
<name>RL20_PSESM</name>
<protein>
    <recommendedName>
        <fullName evidence="2">Large ribosomal subunit protein bL20</fullName>
    </recommendedName>
    <alternativeName>
        <fullName>50S ribosomal protein L20</fullName>
    </alternativeName>
</protein>
<organism>
    <name type="scientific">Pseudomonas syringae pv. tomato (strain ATCC BAA-871 / DC3000)</name>
    <dbReference type="NCBI Taxonomy" id="223283"/>
    <lineage>
        <taxon>Bacteria</taxon>
        <taxon>Pseudomonadati</taxon>
        <taxon>Pseudomonadota</taxon>
        <taxon>Gammaproteobacteria</taxon>
        <taxon>Pseudomonadales</taxon>
        <taxon>Pseudomonadaceae</taxon>
        <taxon>Pseudomonas</taxon>
    </lineage>
</organism>
<comment type="function">
    <text evidence="1">Binds directly to 23S ribosomal RNA and is necessary for the in vitro assembly process of the 50S ribosomal subunit. It is not involved in the protein synthesizing functions of that subunit (By similarity).</text>
</comment>
<comment type="similarity">
    <text evidence="2">Belongs to the bacterial ribosomal protein bL20 family.</text>
</comment>
<feature type="chain" id="PRO_0000177209" description="Large ribosomal subunit protein bL20">
    <location>
        <begin position="1"/>
        <end position="118"/>
    </location>
</feature>
<sequence>MARVKRGVIARKRHKKILKLAKGYYGARSRVFRVAKQAVIKAGQYAYRDRRQKKRQFRALWIARINAGARVNGLSYSRFIAGLKKASIEIDRKVLADLAVNEKAAFAAIVEKAKATLA</sequence>
<accession>P0A159</accession>
<accession>P52828</accession>